<reference key="1">
    <citation type="submission" date="2006-08" db="EMBL/GenBank/DDBJ databases">
        <title>Positive selection in transcription factor genes on the human lineage.</title>
        <authorList>
            <person name="Nickel G.C."/>
            <person name="Tefft D.L."/>
            <person name="Trevarthen K."/>
            <person name="Funt J."/>
            <person name="Adams M.D."/>
        </authorList>
    </citation>
    <scope>NUCLEOTIDE SEQUENCE [GENOMIC DNA]</scope>
</reference>
<proteinExistence type="inferred from homology"/>
<protein>
    <recommendedName>
        <fullName>Homeobox protein Hox-D4</fullName>
    </recommendedName>
</protein>
<comment type="function">
    <text evidence="1">Sequence-specific transcription factor which is part of a developmental regulatory system that provides cells with specific positional identities on the anterior-posterior axis.</text>
</comment>
<comment type="subunit">
    <text evidence="2">Forms a DNA-binding heterodimer with transcription factor PBX1.</text>
</comment>
<comment type="subcellular location">
    <subcellularLocation>
        <location evidence="3">Nucleus</location>
    </subcellularLocation>
</comment>
<comment type="similarity">
    <text evidence="5">Belongs to the Antp homeobox family. Deformed subfamily.</text>
</comment>
<evidence type="ECO:0000250" key="1"/>
<evidence type="ECO:0000250" key="2">
    <source>
        <dbReference type="UniProtKB" id="P09016"/>
    </source>
</evidence>
<evidence type="ECO:0000255" key="3">
    <source>
        <dbReference type="PROSITE-ProRule" id="PRU00108"/>
    </source>
</evidence>
<evidence type="ECO:0000256" key="4">
    <source>
        <dbReference type="SAM" id="MobiDB-lite"/>
    </source>
</evidence>
<evidence type="ECO:0000305" key="5"/>
<keyword id="KW-0217">Developmental protein</keyword>
<keyword id="KW-0238">DNA-binding</keyword>
<keyword id="KW-0371">Homeobox</keyword>
<keyword id="KW-0539">Nucleus</keyword>
<keyword id="KW-1185">Reference proteome</keyword>
<keyword id="KW-0804">Transcription</keyword>
<keyword id="KW-0805">Transcription regulation</keyword>
<name>HXD4_GORGO</name>
<feature type="chain" id="PRO_0000285433" description="Homeobox protein Hox-D4">
    <location>
        <begin position="1"/>
        <end position="255"/>
    </location>
</feature>
<feature type="DNA-binding region" description="Homeobox" evidence="3">
    <location>
        <begin position="154"/>
        <end position="213"/>
    </location>
</feature>
<feature type="region of interest" description="Disordered" evidence="4">
    <location>
        <begin position="31"/>
        <end position="128"/>
    </location>
</feature>
<feature type="region of interest" description="Disordered" evidence="4">
    <location>
        <begin position="212"/>
        <end position="255"/>
    </location>
</feature>
<feature type="short sequence motif" description="Antp-type hexapeptide">
    <location>
        <begin position="133"/>
        <end position="138"/>
    </location>
</feature>
<feature type="compositionally biased region" description="Pro residues" evidence="4">
    <location>
        <begin position="94"/>
        <end position="109"/>
    </location>
</feature>
<feature type="compositionally biased region" description="Low complexity" evidence="4">
    <location>
        <begin position="222"/>
        <end position="234"/>
    </location>
</feature>
<feature type="compositionally biased region" description="Basic and acidic residues" evidence="4">
    <location>
        <begin position="245"/>
        <end position="255"/>
    </location>
</feature>
<organism>
    <name type="scientific">Gorilla gorilla gorilla</name>
    <name type="common">Western lowland gorilla</name>
    <dbReference type="NCBI Taxonomy" id="9595"/>
    <lineage>
        <taxon>Eukaryota</taxon>
        <taxon>Metazoa</taxon>
        <taxon>Chordata</taxon>
        <taxon>Craniata</taxon>
        <taxon>Vertebrata</taxon>
        <taxon>Euteleostomi</taxon>
        <taxon>Mammalia</taxon>
        <taxon>Eutheria</taxon>
        <taxon>Euarchontoglires</taxon>
        <taxon>Primates</taxon>
        <taxon>Haplorrhini</taxon>
        <taxon>Catarrhini</taxon>
        <taxon>Hominidae</taxon>
        <taxon>Gorilla</taxon>
    </lineage>
</organism>
<accession>A1YER7</accession>
<gene>
    <name type="primary">HOXD4</name>
</gene>
<dbReference type="EMBL" id="DQ976448">
    <property type="protein sequence ID" value="ABM46635.1"/>
    <property type="molecule type" value="Genomic_DNA"/>
</dbReference>
<dbReference type="RefSeq" id="XP_004032885.1">
    <property type="nucleotide sequence ID" value="XM_004032837.5"/>
</dbReference>
<dbReference type="BMRB" id="A1YER7"/>
<dbReference type="SMR" id="A1YER7"/>
<dbReference type="FunCoup" id="A1YER7">
    <property type="interactions" value="393"/>
</dbReference>
<dbReference type="STRING" id="9593.ENSGGOP00000046682"/>
<dbReference type="Ensembl" id="ENSGGOT00000044474.1">
    <property type="protein sequence ID" value="ENSGGOP00000046682.1"/>
    <property type="gene ID" value="ENSGGOG00000042533.1"/>
</dbReference>
<dbReference type="GeneID" id="101138037"/>
<dbReference type="KEGG" id="ggo:101138037"/>
<dbReference type="CTD" id="3233"/>
<dbReference type="eggNOG" id="KOG0489">
    <property type="taxonomic scope" value="Eukaryota"/>
</dbReference>
<dbReference type="GeneTree" id="ENSGT00940000157270"/>
<dbReference type="InParanoid" id="A1YER7"/>
<dbReference type="OMA" id="PGQGEHC"/>
<dbReference type="OrthoDB" id="15585at9604"/>
<dbReference type="Proteomes" id="UP000001519">
    <property type="component" value="Chromosome 2B"/>
</dbReference>
<dbReference type="Bgee" id="ENSGGOG00000042533">
    <property type="expression patterns" value="Expressed in adult mammalian kidney and 2 other cell types or tissues"/>
</dbReference>
<dbReference type="GO" id="GO:0030054">
    <property type="term" value="C:cell junction"/>
    <property type="evidence" value="ECO:0007669"/>
    <property type="project" value="Ensembl"/>
</dbReference>
<dbReference type="GO" id="GO:0005654">
    <property type="term" value="C:nucleoplasm"/>
    <property type="evidence" value="ECO:0000318"/>
    <property type="project" value="GO_Central"/>
</dbReference>
<dbReference type="GO" id="GO:0001228">
    <property type="term" value="F:DNA-binding transcription activator activity, RNA polymerase II-specific"/>
    <property type="evidence" value="ECO:0007669"/>
    <property type="project" value="Ensembl"/>
</dbReference>
<dbReference type="GO" id="GO:0000981">
    <property type="term" value="F:DNA-binding transcription factor activity, RNA polymerase II-specific"/>
    <property type="evidence" value="ECO:0000318"/>
    <property type="project" value="GO_Central"/>
</dbReference>
<dbReference type="GO" id="GO:0000978">
    <property type="term" value="F:RNA polymerase II cis-regulatory region sequence-specific DNA binding"/>
    <property type="evidence" value="ECO:0000318"/>
    <property type="project" value="GO_Central"/>
</dbReference>
<dbReference type="GO" id="GO:0009952">
    <property type="term" value="P:anterior/posterior pattern specification"/>
    <property type="evidence" value="ECO:0000318"/>
    <property type="project" value="GO_Central"/>
</dbReference>
<dbReference type="GO" id="GO:0048704">
    <property type="term" value="P:embryonic skeletal system morphogenesis"/>
    <property type="evidence" value="ECO:0000318"/>
    <property type="project" value="GO_Central"/>
</dbReference>
<dbReference type="GO" id="GO:0045944">
    <property type="term" value="P:positive regulation of transcription by RNA polymerase II"/>
    <property type="evidence" value="ECO:0000318"/>
    <property type="project" value="GO_Central"/>
</dbReference>
<dbReference type="GO" id="GO:0048863">
    <property type="term" value="P:stem cell differentiation"/>
    <property type="evidence" value="ECO:0007669"/>
    <property type="project" value="Ensembl"/>
</dbReference>
<dbReference type="CDD" id="cd00086">
    <property type="entry name" value="homeodomain"/>
    <property type="match status" value="1"/>
</dbReference>
<dbReference type="FunFam" id="1.10.10.60:FF:000029">
    <property type="entry name" value="Homeobox protein Hox-D4"/>
    <property type="match status" value="1"/>
</dbReference>
<dbReference type="Gene3D" id="1.10.10.60">
    <property type="entry name" value="Homeodomain-like"/>
    <property type="match status" value="1"/>
</dbReference>
<dbReference type="InterPro" id="IPR050609">
    <property type="entry name" value="Antp_homeobox_Deformed_sf"/>
</dbReference>
<dbReference type="InterPro" id="IPR001356">
    <property type="entry name" value="HD"/>
</dbReference>
<dbReference type="InterPro" id="IPR020479">
    <property type="entry name" value="HD_metazoa"/>
</dbReference>
<dbReference type="InterPro" id="IPR017995">
    <property type="entry name" value="Homeobox_antennapedia"/>
</dbReference>
<dbReference type="InterPro" id="IPR001827">
    <property type="entry name" value="Homeobox_Antennapedia_CS"/>
</dbReference>
<dbReference type="InterPro" id="IPR017970">
    <property type="entry name" value="Homeobox_CS"/>
</dbReference>
<dbReference type="InterPro" id="IPR009057">
    <property type="entry name" value="Homeodomain-like_sf"/>
</dbReference>
<dbReference type="PANTHER" id="PTHR45771:SF5">
    <property type="entry name" value="HOMEOBOX PROTEIN HOX-D4"/>
    <property type="match status" value="1"/>
</dbReference>
<dbReference type="PANTHER" id="PTHR45771">
    <property type="entry name" value="HOMEOTIC PROTEIN DEFORMED"/>
    <property type="match status" value="1"/>
</dbReference>
<dbReference type="Pfam" id="PF00046">
    <property type="entry name" value="Homeodomain"/>
    <property type="match status" value="1"/>
</dbReference>
<dbReference type="PRINTS" id="PR00025">
    <property type="entry name" value="ANTENNAPEDIA"/>
</dbReference>
<dbReference type="PRINTS" id="PR00024">
    <property type="entry name" value="HOMEOBOX"/>
</dbReference>
<dbReference type="SMART" id="SM00389">
    <property type="entry name" value="HOX"/>
    <property type="match status" value="1"/>
</dbReference>
<dbReference type="SUPFAM" id="SSF46689">
    <property type="entry name" value="Homeodomain-like"/>
    <property type="match status" value="1"/>
</dbReference>
<dbReference type="PROSITE" id="PS00032">
    <property type="entry name" value="ANTENNAPEDIA"/>
    <property type="match status" value="1"/>
</dbReference>
<dbReference type="PROSITE" id="PS00027">
    <property type="entry name" value="HOMEOBOX_1"/>
    <property type="match status" value="1"/>
</dbReference>
<dbReference type="PROSITE" id="PS50071">
    <property type="entry name" value="HOMEOBOX_2"/>
    <property type="match status" value="1"/>
</dbReference>
<sequence>MVMSSYMVNSKYVDPKFPPCEEYLQGGYLGEQGADYYGGGAQGADFQPPGLYPRPDFGEQPFGGSGPGPGSALPARGHGQEPGGPGGHYAAPGEPCPAPPAPPPAPLPGAPACSQSDPKQPPPGTALKQPAVVYPWMKKVHVNSVNPNYTGGEPKRSRTAYTRQQVLELEKEFHFNRYLTRRRRIEIAHTLCLSERQIKIWFQNRRMKWKKDHKLPNTKGRSSSSSSSSSCSSSVAPSQHLQPMAKDHHTDLTTL</sequence>